<reference key="1">
    <citation type="journal article" date="1998" name="Cell">
        <title>Motor neuron-derived retinoid signaling specifies the subtype identity of spinal motor neurons.</title>
        <authorList>
            <person name="Sockanathan S."/>
            <person name="Jessell T.M."/>
        </authorList>
    </citation>
    <scope>NUCLEOTIDE SEQUENCE [MRNA]</scope>
</reference>
<reference key="2">
    <citation type="submission" date="1999-10" db="EMBL/GenBank/DDBJ databases">
        <authorList>
            <person name="Capdevila J."/>
        </authorList>
    </citation>
    <scope>NUCLEOTIDE SEQUENCE [MRNA] OF 20-518</scope>
</reference>
<gene>
    <name type="primary">ALDH1A2</name>
    <name type="synonym">RALDH2</name>
</gene>
<keyword id="KW-0963">Cytoplasm</keyword>
<keyword id="KW-0443">Lipid metabolism</keyword>
<keyword id="KW-0520">NAD</keyword>
<keyword id="KW-0560">Oxidoreductase</keyword>
<keyword id="KW-1185">Reference proteome</keyword>
<proteinExistence type="evidence at transcript level"/>
<name>AL1A2_CHICK</name>
<organism>
    <name type="scientific">Gallus gallus</name>
    <name type="common">Chicken</name>
    <dbReference type="NCBI Taxonomy" id="9031"/>
    <lineage>
        <taxon>Eukaryota</taxon>
        <taxon>Metazoa</taxon>
        <taxon>Chordata</taxon>
        <taxon>Craniata</taxon>
        <taxon>Vertebrata</taxon>
        <taxon>Euteleostomi</taxon>
        <taxon>Archelosauria</taxon>
        <taxon>Archosauria</taxon>
        <taxon>Dinosauria</taxon>
        <taxon>Saurischia</taxon>
        <taxon>Theropoda</taxon>
        <taxon>Coelurosauria</taxon>
        <taxon>Aves</taxon>
        <taxon>Neognathae</taxon>
        <taxon>Galloanserae</taxon>
        <taxon>Galliformes</taxon>
        <taxon>Phasianidae</taxon>
        <taxon>Phasianinae</taxon>
        <taxon>Gallus</taxon>
    </lineage>
</organism>
<sequence length="518" mass="56732">MTSSKIEMPGEVKADPAALMASLHLLPSPTLNLEIKHTKIFINNEWQNSESGRVFPVYNPATGEQICEIQEADKVDTDKAVRAARLAFSLGSVWRRMDASERGQLLDKLADLVERDRAVLATMESLNSGKPFLQAFYVDLQGVIKTLRYYAGWADKIHGMTIPVDGDYFTFTRHEPIGVCGQIIPWNFPLLMFAWKIAPALCCGNTVVIKPAEQTPLSALYMGALIKEAGFPPGVVNILPGFGPIVGAAIASHVGIDKIAFTGSTEVGKLIQEAAGRSNLKRVTLELGGKSPNIIFADADLDYAVEQAHQGVFFNQGQCCTAGSRIYVEESIYEEFVRRSVERAKRRVVGSPFDPTTEQGPQIDKKQYNKILELIQSGITEGAKLECGGKGLGRKGFFIEPTVFSNVTDDMRIAKEEIFGPVQEILRFKTVDEVIERANNSDFGLVAAVFTNDINKALTVSSAMQAGTVWINCYNALNAQSPFGGFKMSGNGREMGESGLREYSEVKTVTIKIPQKNS</sequence>
<dbReference type="EC" id="1.2.1.36" evidence="4"/>
<dbReference type="EMBL" id="AF064253">
    <property type="protein sequence ID" value="AAC34299.1"/>
    <property type="status" value="ALT_INIT"/>
    <property type="molecule type" value="mRNA"/>
</dbReference>
<dbReference type="EMBL" id="AF181680">
    <property type="protein sequence ID" value="AAF00485.2"/>
    <property type="molecule type" value="mRNA"/>
</dbReference>
<dbReference type="RefSeq" id="NP_990326.2">
    <property type="nucleotide sequence ID" value="NM_204995.3"/>
</dbReference>
<dbReference type="SMR" id="O93344"/>
<dbReference type="FunCoup" id="O93344">
    <property type="interactions" value="415"/>
</dbReference>
<dbReference type="STRING" id="9031.ENSGALP00000060092"/>
<dbReference type="BindingDB" id="O93344"/>
<dbReference type="ChEMBL" id="CHEMBL4295683"/>
<dbReference type="PaxDb" id="9031-ENSGALP00000033786"/>
<dbReference type="GeneID" id="395844"/>
<dbReference type="KEGG" id="gga:395844"/>
<dbReference type="CTD" id="8854"/>
<dbReference type="VEuPathDB" id="HostDB:geneid_395844"/>
<dbReference type="eggNOG" id="KOG2450">
    <property type="taxonomic scope" value="Eukaryota"/>
</dbReference>
<dbReference type="HOGENOM" id="CLU_005391_0_1_1"/>
<dbReference type="InParanoid" id="O93344"/>
<dbReference type="OMA" id="WSNTFNK"/>
<dbReference type="OrthoDB" id="310895at2759"/>
<dbReference type="PhylomeDB" id="O93344"/>
<dbReference type="UniPathway" id="UPA00912"/>
<dbReference type="PRO" id="PR:O93344"/>
<dbReference type="Proteomes" id="UP000000539">
    <property type="component" value="Unassembled WGS sequence"/>
</dbReference>
<dbReference type="GO" id="GO:0005737">
    <property type="term" value="C:cytoplasm"/>
    <property type="evidence" value="ECO:0007669"/>
    <property type="project" value="UniProtKB-SubCell"/>
</dbReference>
<dbReference type="GO" id="GO:0004029">
    <property type="term" value="F:aldehyde dehydrogenase (NAD+) activity"/>
    <property type="evidence" value="ECO:0000318"/>
    <property type="project" value="GO_Central"/>
</dbReference>
<dbReference type="GO" id="GO:0004745">
    <property type="term" value="F:all-trans-retinol dehydrogenase (NAD+) activity"/>
    <property type="evidence" value="ECO:0000314"/>
    <property type="project" value="AgBase"/>
</dbReference>
<dbReference type="GO" id="GO:0001758">
    <property type="term" value="F:retinal dehydrogenase activity"/>
    <property type="evidence" value="ECO:0000250"/>
    <property type="project" value="UniProtKB"/>
</dbReference>
<dbReference type="GO" id="GO:0001947">
    <property type="term" value="P:heart looping"/>
    <property type="evidence" value="ECO:0000315"/>
    <property type="project" value="AgBase"/>
</dbReference>
<dbReference type="GO" id="GO:0003007">
    <property type="term" value="P:heart morphogenesis"/>
    <property type="evidence" value="ECO:0000315"/>
    <property type="project" value="AgBase"/>
</dbReference>
<dbReference type="GO" id="GO:0010628">
    <property type="term" value="P:positive regulation of gene expression"/>
    <property type="evidence" value="ECO:0000270"/>
    <property type="project" value="AgBase"/>
</dbReference>
<dbReference type="GO" id="GO:0051289">
    <property type="term" value="P:protein homotetramerization"/>
    <property type="evidence" value="ECO:0000250"/>
    <property type="project" value="UniProtKB"/>
</dbReference>
<dbReference type="GO" id="GO:0032526">
    <property type="term" value="P:response to retinoic acid"/>
    <property type="evidence" value="ECO:0000250"/>
    <property type="project" value="UniProtKB"/>
</dbReference>
<dbReference type="GO" id="GO:0002138">
    <property type="term" value="P:retinoic acid biosynthetic process"/>
    <property type="evidence" value="ECO:0000250"/>
    <property type="project" value="UniProtKB"/>
</dbReference>
<dbReference type="GO" id="GO:0042573">
    <property type="term" value="P:retinoic acid metabolic process"/>
    <property type="evidence" value="ECO:0000250"/>
    <property type="project" value="UniProtKB"/>
</dbReference>
<dbReference type="GO" id="GO:0042572">
    <property type="term" value="P:retinol metabolic process"/>
    <property type="evidence" value="ECO:0007669"/>
    <property type="project" value="UniProtKB-UniPathway"/>
</dbReference>
<dbReference type="GO" id="GO:0021522">
    <property type="term" value="P:spinal cord motor neuron differentiation"/>
    <property type="evidence" value="ECO:0000270"/>
    <property type="project" value="AgBase"/>
</dbReference>
<dbReference type="CDD" id="cd07141">
    <property type="entry name" value="ALDH_F1AB_F2_RALDH1"/>
    <property type="match status" value="1"/>
</dbReference>
<dbReference type="FunFam" id="3.40.605.10:FF:000050">
    <property type="entry name" value="Aldehyde dehydrogenase, mitochondrial"/>
    <property type="match status" value="1"/>
</dbReference>
<dbReference type="FunFam" id="3.40.309.10:FF:000001">
    <property type="entry name" value="Mitochondrial aldehyde dehydrogenase 2"/>
    <property type="match status" value="1"/>
</dbReference>
<dbReference type="Gene3D" id="3.40.605.10">
    <property type="entry name" value="Aldehyde Dehydrogenase, Chain A, domain 1"/>
    <property type="match status" value="1"/>
</dbReference>
<dbReference type="Gene3D" id="3.40.309.10">
    <property type="entry name" value="Aldehyde Dehydrogenase, Chain A, domain 2"/>
    <property type="match status" value="1"/>
</dbReference>
<dbReference type="InterPro" id="IPR016161">
    <property type="entry name" value="Ald_DH/histidinol_DH"/>
</dbReference>
<dbReference type="InterPro" id="IPR016163">
    <property type="entry name" value="Ald_DH_C"/>
</dbReference>
<dbReference type="InterPro" id="IPR016160">
    <property type="entry name" value="Ald_DH_CS_CYS"/>
</dbReference>
<dbReference type="InterPro" id="IPR029510">
    <property type="entry name" value="Ald_DH_CS_GLU"/>
</dbReference>
<dbReference type="InterPro" id="IPR016162">
    <property type="entry name" value="Ald_DH_N"/>
</dbReference>
<dbReference type="InterPro" id="IPR015590">
    <property type="entry name" value="Aldehyde_DH_dom"/>
</dbReference>
<dbReference type="PANTHER" id="PTHR11699">
    <property type="entry name" value="ALDEHYDE DEHYDROGENASE-RELATED"/>
    <property type="match status" value="1"/>
</dbReference>
<dbReference type="Pfam" id="PF00171">
    <property type="entry name" value="Aldedh"/>
    <property type="match status" value="1"/>
</dbReference>
<dbReference type="SUPFAM" id="SSF53720">
    <property type="entry name" value="ALDH-like"/>
    <property type="match status" value="1"/>
</dbReference>
<dbReference type="PROSITE" id="PS00070">
    <property type="entry name" value="ALDEHYDE_DEHYDR_CYS"/>
    <property type="match status" value="1"/>
</dbReference>
<dbReference type="PROSITE" id="PS00687">
    <property type="entry name" value="ALDEHYDE_DEHYDR_GLU"/>
    <property type="match status" value="1"/>
</dbReference>
<feature type="chain" id="PRO_0000056425" description="Retinal dehydrogenase 2">
    <location>
        <begin position="1"/>
        <end position="518"/>
    </location>
</feature>
<feature type="active site" description="Proton acceptor" evidence="5 6">
    <location>
        <position position="286"/>
    </location>
</feature>
<feature type="active site" description="Nucleophile" evidence="5 6">
    <location>
        <position position="320"/>
    </location>
</feature>
<feature type="binding site" evidence="2">
    <location>
        <begin position="184"/>
        <end position="186"/>
    </location>
    <ligand>
        <name>NAD(+)</name>
        <dbReference type="ChEBI" id="CHEBI:57540"/>
    </ligand>
</feature>
<feature type="binding site" evidence="2">
    <location>
        <begin position="210"/>
        <end position="213"/>
    </location>
    <ligand>
        <name>NAD(+)</name>
        <dbReference type="ChEBI" id="CHEBI:57540"/>
    </ligand>
</feature>
<feature type="binding site" evidence="2">
    <location>
        <begin position="264"/>
        <end position="266"/>
    </location>
    <ligand>
        <name>NAD(+)</name>
        <dbReference type="ChEBI" id="CHEBI:57540"/>
    </ligand>
</feature>
<feature type="binding site" evidence="2">
    <location>
        <begin position="366"/>
        <end position="370"/>
    </location>
    <ligand>
        <name>NAD(+)</name>
        <dbReference type="ChEBI" id="CHEBI:57540"/>
    </ligand>
</feature>
<feature type="binding site" evidence="2">
    <location>
        <position position="417"/>
    </location>
    <ligand>
        <name>NAD(+)</name>
        <dbReference type="ChEBI" id="CHEBI:57540"/>
    </ligand>
</feature>
<feature type="site" description="Transition state stabilizer" evidence="1">
    <location>
        <position position="187"/>
    </location>
</feature>
<evidence type="ECO:0000250" key="1"/>
<evidence type="ECO:0000250" key="2">
    <source>
        <dbReference type="UniProtKB" id="O94788"/>
    </source>
</evidence>
<evidence type="ECO:0000250" key="3">
    <source>
        <dbReference type="UniProtKB" id="Q62148"/>
    </source>
</evidence>
<evidence type="ECO:0000250" key="4">
    <source>
        <dbReference type="UniProtKB" id="Q63639"/>
    </source>
</evidence>
<evidence type="ECO:0000255" key="5">
    <source>
        <dbReference type="PROSITE-ProRule" id="PRU10007"/>
    </source>
</evidence>
<evidence type="ECO:0000255" key="6">
    <source>
        <dbReference type="PROSITE-ProRule" id="PRU10008"/>
    </source>
</evidence>
<evidence type="ECO:0000305" key="7"/>
<comment type="function">
    <text evidence="3 4">Catalyzes the NAD-dependent oxidation of aldehyde substrates, such as all-trans-retinal and all-trans-13,14-dihydroretinal, to their corresponding carboxylic acids, all-trans-retinoate and all-trans-13,14-dihydroretinoate, respectively. Retinoate signaling is critical for the transcriptional control of many genes, for instance it is crucial for initiation of meiosis in both male and female (By similarity). Recognizes retinal as substrate, both in its free form and when bound to cellular retinol-binding protein (By similarity). Lacks activity with benzaldehyde, acetaldehyde and octanal (By similarity). Displays complete lack of activity with citral (By similarity).</text>
</comment>
<comment type="catalytic activity">
    <reaction evidence="3">
        <text>retinal + NAD(+) + H2O = retinoate + NADH + 2 H(+)</text>
        <dbReference type="Rhea" id="RHEA:16177"/>
        <dbReference type="ChEBI" id="CHEBI:15035"/>
        <dbReference type="ChEBI" id="CHEBI:15036"/>
        <dbReference type="ChEBI" id="CHEBI:15377"/>
        <dbReference type="ChEBI" id="CHEBI:15378"/>
        <dbReference type="ChEBI" id="CHEBI:57540"/>
        <dbReference type="ChEBI" id="CHEBI:57945"/>
        <dbReference type="EC" id="1.2.1.36"/>
    </reaction>
    <physiologicalReaction direction="left-to-right" evidence="3">
        <dbReference type="Rhea" id="RHEA:16178"/>
    </physiologicalReaction>
</comment>
<comment type="catalytic activity">
    <reaction evidence="3">
        <text>all-trans-retinal + NAD(+) + H2O = all-trans-retinoate + NADH + 2 H(+)</text>
        <dbReference type="Rhea" id="RHEA:42080"/>
        <dbReference type="ChEBI" id="CHEBI:15377"/>
        <dbReference type="ChEBI" id="CHEBI:15378"/>
        <dbReference type="ChEBI" id="CHEBI:17898"/>
        <dbReference type="ChEBI" id="CHEBI:35291"/>
        <dbReference type="ChEBI" id="CHEBI:57540"/>
        <dbReference type="ChEBI" id="CHEBI:57945"/>
        <dbReference type="EC" id="1.2.1.36"/>
    </reaction>
    <physiologicalReaction direction="left-to-right" evidence="3">
        <dbReference type="Rhea" id="RHEA:42081"/>
    </physiologicalReaction>
</comment>
<comment type="catalytic activity">
    <reaction evidence="3">
        <text>all-trans-13,14-dihydroretinal + NAD(+) + H2O = all-trans-13,14-dihydroretinoate + NADH + 2 H(+)</text>
        <dbReference type="Rhea" id="RHEA:75119"/>
        <dbReference type="ChEBI" id="CHEBI:15377"/>
        <dbReference type="ChEBI" id="CHEBI:15378"/>
        <dbReference type="ChEBI" id="CHEBI:57540"/>
        <dbReference type="ChEBI" id="CHEBI:57945"/>
        <dbReference type="ChEBI" id="CHEBI:194182"/>
        <dbReference type="ChEBI" id="CHEBI:194183"/>
    </reaction>
    <physiologicalReaction direction="left-to-right" evidence="3">
        <dbReference type="Rhea" id="RHEA:75120"/>
    </physiologicalReaction>
</comment>
<comment type="pathway">
    <text evidence="4">Cofactor metabolism; retinol metabolism.</text>
</comment>
<comment type="subunit">
    <text evidence="2">Homotetramer.</text>
</comment>
<comment type="subcellular location">
    <subcellularLocation>
        <location>Cytoplasm</location>
    </subcellularLocation>
</comment>
<comment type="similarity">
    <text evidence="7">Belongs to the aldehyde dehydrogenase family.</text>
</comment>
<comment type="sequence caution" evidence="7">
    <conflict type="erroneous initiation">
        <sequence resource="EMBL-CDS" id="AAC34299"/>
    </conflict>
</comment>
<protein>
    <recommendedName>
        <fullName>Retinal dehydrogenase 2</fullName>
        <shortName>RALDH 2</shortName>
        <shortName>RalDH2</shortName>
        <ecNumber evidence="4">1.2.1.36</ecNumber>
    </recommendedName>
    <alternativeName>
        <fullName>Aldehyde dehydrogenase family 1 member A2</fullName>
        <shortName>ALDH1A2</shortName>
    </alternativeName>
    <alternativeName>
        <fullName>Retinaldehyde-specific dehydrogenase type 2</fullName>
        <shortName>RALDH(II)</shortName>
    </alternativeName>
</protein>
<accession>O93344</accession>
<accession>Q549A6</accession>